<keyword id="KW-0342">GTP-binding</keyword>
<keyword id="KW-0378">Hydrolase</keyword>
<keyword id="KW-0479">Metal-binding</keyword>
<keyword id="KW-0547">Nucleotide-binding</keyword>
<keyword id="KW-0554">One-carbon metabolism</keyword>
<keyword id="KW-0862">Zinc</keyword>
<gene>
    <name evidence="2" type="primary">folE</name>
    <name type="ordered locus">RPA3391</name>
</gene>
<reference key="1">
    <citation type="journal article" date="2004" name="Nat. Biotechnol.">
        <title>Complete genome sequence of the metabolically versatile photosynthetic bacterium Rhodopseudomonas palustris.</title>
        <authorList>
            <person name="Larimer F.W."/>
            <person name="Chain P."/>
            <person name="Hauser L."/>
            <person name="Lamerdin J.E."/>
            <person name="Malfatti S."/>
            <person name="Do L."/>
            <person name="Land M.L."/>
            <person name="Pelletier D.A."/>
            <person name="Beatty J.T."/>
            <person name="Lang A.S."/>
            <person name="Tabita F.R."/>
            <person name="Gibson J.L."/>
            <person name="Hanson T.E."/>
            <person name="Bobst C."/>
            <person name="Torres y Torres J.L."/>
            <person name="Peres C."/>
            <person name="Harrison F.H."/>
            <person name="Gibson J."/>
            <person name="Harwood C.S."/>
        </authorList>
    </citation>
    <scope>NUCLEOTIDE SEQUENCE [LARGE SCALE GENOMIC DNA]</scope>
    <source>
        <strain>ATCC BAA-98 / CGA009</strain>
    </source>
</reference>
<evidence type="ECO:0000250" key="1"/>
<evidence type="ECO:0000255" key="2">
    <source>
        <dbReference type="HAMAP-Rule" id="MF_00223"/>
    </source>
</evidence>
<evidence type="ECO:0000256" key="3">
    <source>
        <dbReference type="SAM" id="MobiDB-lite"/>
    </source>
</evidence>
<accession>Q6N4E7</accession>
<sequence>MDAKIKPIRGTNPAEGRPEFQPAELEPSEFLEVAVQPDQPRPSRAEAEAAVKTLLSYIGENTEREGLIDTPRRVVEAYDELFQGYHQCPKEVLERTFGETAGYDDFVLVRNISFTSHCEHHVMPFYGKAHIAYTPVERVVGLSKLARLVDIFARRLQTQEHLTAQIAAAIDEVLKPRGVAVLLEAEHTCMSVRGIAKKGATTFTSRYTGVFRDNPAEQARFMSMVRDRG</sequence>
<organism>
    <name type="scientific">Rhodopseudomonas palustris (strain ATCC BAA-98 / CGA009)</name>
    <dbReference type="NCBI Taxonomy" id="258594"/>
    <lineage>
        <taxon>Bacteria</taxon>
        <taxon>Pseudomonadati</taxon>
        <taxon>Pseudomonadota</taxon>
        <taxon>Alphaproteobacteria</taxon>
        <taxon>Hyphomicrobiales</taxon>
        <taxon>Nitrobacteraceae</taxon>
        <taxon>Rhodopseudomonas</taxon>
    </lineage>
</organism>
<feature type="chain" id="PRO_1000043720" description="GTP cyclohydrolase 1">
    <location>
        <begin position="1"/>
        <end position="229"/>
    </location>
</feature>
<feature type="region of interest" description="Disordered" evidence="3">
    <location>
        <begin position="1"/>
        <end position="26"/>
    </location>
</feature>
<feature type="binding site" evidence="2">
    <location>
        <position position="118"/>
    </location>
    <ligand>
        <name>Zn(2+)</name>
        <dbReference type="ChEBI" id="CHEBI:29105"/>
    </ligand>
</feature>
<feature type="binding site" evidence="2">
    <location>
        <position position="121"/>
    </location>
    <ligand>
        <name>Zn(2+)</name>
        <dbReference type="ChEBI" id="CHEBI:29105"/>
    </ligand>
</feature>
<feature type="binding site" evidence="2">
    <location>
        <position position="189"/>
    </location>
    <ligand>
        <name>Zn(2+)</name>
        <dbReference type="ChEBI" id="CHEBI:29105"/>
    </ligand>
</feature>
<comment type="catalytic activity">
    <reaction evidence="2">
        <text>GTP + H2O = 7,8-dihydroneopterin 3'-triphosphate + formate + H(+)</text>
        <dbReference type="Rhea" id="RHEA:17473"/>
        <dbReference type="ChEBI" id="CHEBI:15377"/>
        <dbReference type="ChEBI" id="CHEBI:15378"/>
        <dbReference type="ChEBI" id="CHEBI:15740"/>
        <dbReference type="ChEBI" id="CHEBI:37565"/>
        <dbReference type="ChEBI" id="CHEBI:58462"/>
        <dbReference type="EC" id="3.5.4.16"/>
    </reaction>
</comment>
<comment type="pathway">
    <text evidence="2">Cofactor biosynthesis; 7,8-dihydroneopterin triphosphate biosynthesis; 7,8-dihydroneopterin triphosphate from GTP: step 1/1.</text>
</comment>
<comment type="subunit">
    <text evidence="1">Toroid-shaped homodecamer, composed of two pentamers of five dimers.</text>
</comment>
<comment type="similarity">
    <text evidence="2">Belongs to the GTP cyclohydrolase I family.</text>
</comment>
<name>GCH1_RHOPA</name>
<dbReference type="EC" id="3.5.4.16" evidence="2"/>
<dbReference type="EMBL" id="BX572603">
    <property type="protein sequence ID" value="CAE28832.1"/>
    <property type="molecule type" value="Genomic_DNA"/>
</dbReference>
<dbReference type="RefSeq" id="WP_011158933.1">
    <property type="nucleotide sequence ID" value="NZ_CP116810.1"/>
</dbReference>
<dbReference type="SMR" id="Q6N4E7"/>
<dbReference type="STRING" id="258594.RPA3391"/>
<dbReference type="GeneID" id="66894481"/>
<dbReference type="eggNOG" id="COG0302">
    <property type="taxonomic scope" value="Bacteria"/>
</dbReference>
<dbReference type="HOGENOM" id="CLU_049768_3_1_5"/>
<dbReference type="PhylomeDB" id="Q6N4E7"/>
<dbReference type="UniPathway" id="UPA00848">
    <property type="reaction ID" value="UER00151"/>
</dbReference>
<dbReference type="GO" id="GO:0005737">
    <property type="term" value="C:cytoplasm"/>
    <property type="evidence" value="ECO:0007669"/>
    <property type="project" value="TreeGrafter"/>
</dbReference>
<dbReference type="GO" id="GO:0005525">
    <property type="term" value="F:GTP binding"/>
    <property type="evidence" value="ECO:0007669"/>
    <property type="project" value="UniProtKB-KW"/>
</dbReference>
<dbReference type="GO" id="GO:0003934">
    <property type="term" value="F:GTP cyclohydrolase I activity"/>
    <property type="evidence" value="ECO:0007669"/>
    <property type="project" value="UniProtKB-UniRule"/>
</dbReference>
<dbReference type="GO" id="GO:0008270">
    <property type="term" value="F:zinc ion binding"/>
    <property type="evidence" value="ECO:0007669"/>
    <property type="project" value="UniProtKB-UniRule"/>
</dbReference>
<dbReference type="GO" id="GO:0006730">
    <property type="term" value="P:one-carbon metabolic process"/>
    <property type="evidence" value="ECO:0007669"/>
    <property type="project" value="UniProtKB-UniRule"/>
</dbReference>
<dbReference type="GO" id="GO:0006729">
    <property type="term" value="P:tetrahydrobiopterin biosynthetic process"/>
    <property type="evidence" value="ECO:0007669"/>
    <property type="project" value="TreeGrafter"/>
</dbReference>
<dbReference type="GO" id="GO:0046654">
    <property type="term" value="P:tetrahydrofolate biosynthetic process"/>
    <property type="evidence" value="ECO:0007669"/>
    <property type="project" value="UniProtKB-UniRule"/>
</dbReference>
<dbReference type="FunFam" id="1.10.286.10:FF:000001">
    <property type="entry name" value="GTP cyclohydrolase 1"/>
    <property type="match status" value="1"/>
</dbReference>
<dbReference type="FunFam" id="3.30.1130.10:FF:000001">
    <property type="entry name" value="GTP cyclohydrolase 1"/>
    <property type="match status" value="1"/>
</dbReference>
<dbReference type="Gene3D" id="1.10.286.10">
    <property type="match status" value="1"/>
</dbReference>
<dbReference type="Gene3D" id="3.30.1130.10">
    <property type="match status" value="1"/>
</dbReference>
<dbReference type="HAMAP" id="MF_00223">
    <property type="entry name" value="FolE"/>
    <property type="match status" value="1"/>
</dbReference>
<dbReference type="InterPro" id="IPR043133">
    <property type="entry name" value="GTP-CH-I_C/QueF"/>
</dbReference>
<dbReference type="InterPro" id="IPR043134">
    <property type="entry name" value="GTP-CH-I_N"/>
</dbReference>
<dbReference type="InterPro" id="IPR001474">
    <property type="entry name" value="GTP_CycHdrlase_I"/>
</dbReference>
<dbReference type="InterPro" id="IPR018234">
    <property type="entry name" value="GTP_CycHdrlase_I_CS"/>
</dbReference>
<dbReference type="InterPro" id="IPR020602">
    <property type="entry name" value="GTP_CycHdrlase_I_dom"/>
</dbReference>
<dbReference type="NCBIfam" id="TIGR00063">
    <property type="entry name" value="folE"/>
    <property type="match status" value="1"/>
</dbReference>
<dbReference type="NCBIfam" id="NF006825">
    <property type="entry name" value="PRK09347.1-2"/>
    <property type="match status" value="1"/>
</dbReference>
<dbReference type="NCBIfam" id="NF006826">
    <property type="entry name" value="PRK09347.1-3"/>
    <property type="match status" value="1"/>
</dbReference>
<dbReference type="PANTHER" id="PTHR11109:SF7">
    <property type="entry name" value="GTP CYCLOHYDROLASE 1"/>
    <property type="match status" value="1"/>
</dbReference>
<dbReference type="PANTHER" id="PTHR11109">
    <property type="entry name" value="GTP CYCLOHYDROLASE I"/>
    <property type="match status" value="1"/>
</dbReference>
<dbReference type="Pfam" id="PF01227">
    <property type="entry name" value="GTP_cyclohydroI"/>
    <property type="match status" value="1"/>
</dbReference>
<dbReference type="SUPFAM" id="SSF55620">
    <property type="entry name" value="Tetrahydrobiopterin biosynthesis enzymes-like"/>
    <property type="match status" value="1"/>
</dbReference>
<dbReference type="PROSITE" id="PS00859">
    <property type="entry name" value="GTP_CYCLOHYDROL_1_1"/>
    <property type="match status" value="1"/>
</dbReference>
<proteinExistence type="inferred from homology"/>
<protein>
    <recommendedName>
        <fullName evidence="2">GTP cyclohydrolase 1</fullName>
        <ecNumber evidence="2">3.5.4.16</ecNumber>
    </recommendedName>
    <alternativeName>
        <fullName evidence="2">GTP cyclohydrolase I</fullName>
        <shortName evidence="2">GTP-CH-I</shortName>
    </alternativeName>
</protein>